<proteinExistence type="inferred from homology"/>
<keyword id="KW-0143">Chaperone</keyword>
<keyword id="KW-0963">Cytoplasm</keyword>
<keyword id="KW-1185">Reference proteome</keyword>
<keyword id="KW-0346">Stress response</keyword>
<gene>
    <name evidence="1" type="primary">grpE</name>
    <name type="ordered locus">Swit_1253</name>
</gene>
<reference key="1">
    <citation type="journal article" date="2010" name="J. Bacteriol.">
        <title>Genome sequence of the dioxin-mineralizing bacterium Sphingomonas wittichii RW1.</title>
        <authorList>
            <person name="Miller T.R."/>
            <person name="Delcher A.L."/>
            <person name="Salzberg S.L."/>
            <person name="Saunders E."/>
            <person name="Detter J.C."/>
            <person name="Halden R.U."/>
        </authorList>
    </citation>
    <scope>NUCLEOTIDE SEQUENCE [LARGE SCALE GENOMIC DNA]</scope>
    <source>
        <strain>DSM 6014 / CCUG 31198 / JCM 15750 / NBRC 105917 / EY 4224 / RW1</strain>
    </source>
</reference>
<evidence type="ECO:0000255" key="1">
    <source>
        <dbReference type="HAMAP-Rule" id="MF_01151"/>
    </source>
</evidence>
<evidence type="ECO:0000256" key="2">
    <source>
        <dbReference type="SAM" id="MobiDB-lite"/>
    </source>
</evidence>
<accession>A5V5Q2</accession>
<comment type="function">
    <text evidence="1">Participates actively in the response to hyperosmotic and heat shock by preventing the aggregation of stress-denatured proteins, in association with DnaK and GrpE. It is the nucleotide exchange factor for DnaK and may function as a thermosensor. Unfolded proteins bind initially to DnaJ; upon interaction with the DnaJ-bound protein, DnaK hydrolyzes its bound ATP, resulting in the formation of a stable complex. GrpE releases ADP from DnaK; ATP binding to DnaK triggers the release of the substrate protein, thus completing the reaction cycle. Several rounds of ATP-dependent interactions between DnaJ, DnaK and GrpE are required for fully efficient folding.</text>
</comment>
<comment type="subunit">
    <text evidence="1">Homodimer.</text>
</comment>
<comment type="subcellular location">
    <subcellularLocation>
        <location evidence="1">Cytoplasm</location>
    </subcellularLocation>
</comment>
<comment type="similarity">
    <text evidence="1">Belongs to the GrpE family.</text>
</comment>
<name>GRPE_RHIWR</name>
<sequence length="181" mass="19778">MSEENIGENEVETPETEPSAEAEVESPFAKLEGELEKLRNEVLYAQAETQNVRRRLEKEKADASAYAATGFARDMLSVADNLGRALAAIPAELREDDRIGSLLTGIEMTAKELENVFQRNGISKIEALGAKLDPNRHQAMVELPSADAEPGTVIQEMQAGYMIKDRLLRPALVGVAKTPEA</sequence>
<protein>
    <recommendedName>
        <fullName evidence="1">Protein GrpE</fullName>
    </recommendedName>
    <alternativeName>
        <fullName evidence="1">HSP-70 cofactor</fullName>
    </alternativeName>
</protein>
<dbReference type="EMBL" id="CP000699">
    <property type="protein sequence ID" value="ABQ67618.1"/>
    <property type="molecule type" value="Genomic_DNA"/>
</dbReference>
<dbReference type="SMR" id="A5V5Q2"/>
<dbReference type="STRING" id="392499.Swit_1253"/>
<dbReference type="PaxDb" id="392499-Swit_1253"/>
<dbReference type="KEGG" id="swi:Swit_1253"/>
<dbReference type="eggNOG" id="COG0576">
    <property type="taxonomic scope" value="Bacteria"/>
</dbReference>
<dbReference type="HOGENOM" id="CLU_057217_6_2_5"/>
<dbReference type="OrthoDB" id="9789811at2"/>
<dbReference type="Proteomes" id="UP000001989">
    <property type="component" value="Chromosome"/>
</dbReference>
<dbReference type="GO" id="GO:0005737">
    <property type="term" value="C:cytoplasm"/>
    <property type="evidence" value="ECO:0007669"/>
    <property type="project" value="UniProtKB-SubCell"/>
</dbReference>
<dbReference type="GO" id="GO:0000774">
    <property type="term" value="F:adenyl-nucleotide exchange factor activity"/>
    <property type="evidence" value="ECO:0007669"/>
    <property type="project" value="InterPro"/>
</dbReference>
<dbReference type="GO" id="GO:0042803">
    <property type="term" value="F:protein homodimerization activity"/>
    <property type="evidence" value="ECO:0007669"/>
    <property type="project" value="InterPro"/>
</dbReference>
<dbReference type="GO" id="GO:0051087">
    <property type="term" value="F:protein-folding chaperone binding"/>
    <property type="evidence" value="ECO:0007669"/>
    <property type="project" value="InterPro"/>
</dbReference>
<dbReference type="GO" id="GO:0051082">
    <property type="term" value="F:unfolded protein binding"/>
    <property type="evidence" value="ECO:0007669"/>
    <property type="project" value="TreeGrafter"/>
</dbReference>
<dbReference type="GO" id="GO:0006457">
    <property type="term" value="P:protein folding"/>
    <property type="evidence" value="ECO:0007669"/>
    <property type="project" value="InterPro"/>
</dbReference>
<dbReference type="CDD" id="cd00446">
    <property type="entry name" value="GrpE"/>
    <property type="match status" value="1"/>
</dbReference>
<dbReference type="FunFam" id="2.30.22.10:FF:000001">
    <property type="entry name" value="Protein GrpE"/>
    <property type="match status" value="1"/>
</dbReference>
<dbReference type="Gene3D" id="3.90.20.20">
    <property type="match status" value="1"/>
</dbReference>
<dbReference type="Gene3D" id="2.30.22.10">
    <property type="entry name" value="Head domain of nucleotide exchange factor GrpE"/>
    <property type="match status" value="1"/>
</dbReference>
<dbReference type="HAMAP" id="MF_01151">
    <property type="entry name" value="GrpE"/>
    <property type="match status" value="1"/>
</dbReference>
<dbReference type="InterPro" id="IPR000740">
    <property type="entry name" value="GrpE"/>
</dbReference>
<dbReference type="InterPro" id="IPR013805">
    <property type="entry name" value="GrpE_coiled_coil"/>
</dbReference>
<dbReference type="InterPro" id="IPR009012">
    <property type="entry name" value="GrpE_head"/>
</dbReference>
<dbReference type="NCBIfam" id="NF010738">
    <property type="entry name" value="PRK14140.1"/>
    <property type="match status" value="1"/>
</dbReference>
<dbReference type="PANTHER" id="PTHR21237">
    <property type="entry name" value="GRPE PROTEIN"/>
    <property type="match status" value="1"/>
</dbReference>
<dbReference type="PANTHER" id="PTHR21237:SF23">
    <property type="entry name" value="GRPE PROTEIN HOMOLOG, MITOCHONDRIAL"/>
    <property type="match status" value="1"/>
</dbReference>
<dbReference type="Pfam" id="PF01025">
    <property type="entry name" value="GrpE"/>
    <property type="match status" value="1"/>
</dbReference>
<dbReference type="PRINTS" id="PR00773">
    <property type="entry name" value="GRPEPROTEIN"/>
</dbReference>
<dbReference type="SUPFAM" id="SSF58014">
    <property type="entry name" value="Coiled-coil domain of nucleotide exchange factor GrpE"/>
    <property type="match status" value="1"/>
</dbReference>
<dbReference type="SUPFAM" id="SSF51064">
    <property type="entry name" value="Head domain of nucleotide exchange factor GrpE"/>
    <property type="match status" value="1"/>
</dbReference>
<dbReference type="PROSITE" id="PS01071">
    <property type="entry name" value="GRPE"/>
    <property type="match status" value="1"/>
</dbReference>
<organism>
    <name type="scientific">Rhizorhabdus wittichii (strain DSM 6014 / CCUG 31198 / JCM 15750 / NBRC 105917 / EY 4224 / RW1)</name>
    <name type="common">Sphingomonas wittichii</name>
    <dbReference type="NCBI Taxonomy" id="392499"/>
    <lineage>
        <taxon>Bacteria</taxon>
        <taxon>Pseudomonadati</taxon>
        <taxon>Pseudomonadota</taxon>
        <taxon>Alphaproteobacteria</taxon>
        <taxon>Sphingomonadales</taxon>
        <taxon>Sphingomonadaceae</taxon>
        <taxon>Rhizorhabdus</taxon>
    </lineage>
</organism>
<feature type="chain" id="PRO_1000164215" description="Protein GrpE">
    <location>
        <begin position="1"/>
        <end position="181"/>
    </location>
</feature>
<feature type="region of interest" description="Disordered" evidence="2">
    <location>
        <begin position="1"/>
        <end position="26"/>
    </location>
</feature>
<feature type="compositionally biased region" description="Acidic residues" evidence="2">
    <location>
        <begin position="1"/>
        <end position="24"/>
    </location>
</feature>